<gene>
    <name type="primary">rbbp4-a</name>
    <name type="synonym">rbap48-a</name>
</gene>
<accession>O93377</accession>
<accession>Q6AZU0</accession>
<keyword id="KW-0007">Acetylation</keyword>
<keyword id="KW-0131">Cell cycle</keyword>
<keyword id="KW-0156">Chromatin regulator</keyword>
<keyword id="KW-0158">Chromosome</keyword>
<keyword id="KW-0235">DNA replication</keyword>
<keyword id="KW-0539">Nucleus</keyword>
<keyword id="KW-1185">Reference proteome</keyword>
<keyword id="KW-0677">Repeat</keyword>
<keyword id="KW-0678">Repressor</keyword>
<keyword id="KW-0779">Telomere</keyword>
<keyword id="KW-0804">Transcription</keyword>
<keyword id="KW-0805">Transcription regulation</keyword>
<keyword id="KW-0853">WD repeat</keyword>
<name>RBP4A_XENLA</name>
<proteinExistence type="evidence at protein level"/>
<evidence type="ECO:0000250" key="1"/>
<evidence type="ECO:0000250" key="2">
    <source>
        <dbReference type="UniProtKB" id="Q09028"/>
    </source>
</evidence>
<evidence type="ECO:0000269" key="3">
    <source>
    </source>
</evidence>
<evidence type="ECO:0000269" key="4">
    <source>
    </source>
</evidence>
<evidence type="ECO:0000305" key="5"/>
<organism>
    <name type="scientific">Xenopus laevis</name>
    <name type="common">African clawed frog</name>
    <dbReference type="NCBI Taxonomy" id="8355"/>
    <lineage>
        <taxon>Eukaryota</taxon>
        <taxon>Metazoa</taxon>
        <taxon>Chordata</taxon>
        <taxon>Craniata</taxon>
        <taxon>Vertebrata</taxon>
        <taxon>Euteleostomi</taxon>
        <taxon>Amphibia</taxon>
        <taxon>Batrachia</taxon>
        <taxon>Anura</taxon>
        <taxon>Pipoidea</taxon>
        <taxon>Pipidae</taxon>
        <taxon>Xenopodinae</taxon>
        <taxon>Xenopus</taxon>
        <taxon>Xenopus</taxon>
    </lineage>
</organism>
<protein>
    <recommendedName>
        <fullName>Histone-binding protein RBBP4-A</fullName>
    </recommendedName>
    <alternativeName>
        <fullName>Retinoblastoma-binding protein 4-A</fullName>
        <shortName>RBBP-4-A</shortName>
    </alternativeName>
    <alternativeName>
        <fullName>Retinoblastoma-binding protein p48-A</fullName>
    </alternativeName>
</protein>
<comment type="function">
    <text evidence="2 3">Core histone-binding subunit that may target chromatin assembly factors, chromatin remodeling factors and histone deacetylases to their histone substrates in a manner that is regulated by nucleosomal DNA (PubMed:10454532). Component of several complexes which regulate chromatin metabolism (By similarity).</text>
</comment>
<comment type="subunit">
    <text evidence="3 4">Binds directly to histone H4, probably via helix 1 of the histone fold, a region that is not accessible when histone H4 is in chromatin (PubMed:10454532). Probably forms a large corepressor complex that contains ncor1, sin3a, hdac1-A and/or hdac1-B, hdac2, rbbp4-A and/or rbbp4-B and possibly rbbp7 (PubMed:11254656).</text>
</comment>
<comment type="subcellular location">
    <subcellularLocation>
        <location evidence="2">Nucleus</location>
    </subcellularLocation>
    <subcellularLocation>
        <location evidence="2">Chromosome</location>
        <location evidence="2">Telomere</location>
    </subcellularLocation>
</comment>
<comment type="similarity">
    <text evidence="5">Belongs to the WD repeat RBAP46/RBAP48/MSI1 family.</text>
</comment>
<feature type="initiator methionine" description="Removed" evidence="1">
    <location>
        <position position="1"/>
    </location>
</feature>
<feature type="chain" id="PRO_0000051190" description="Histone-binding protein RBBP4-A">
    <location>
        <begin position="2"/>
        <end position="425"/>
    </location>
</feature>
<feature type="repeat" description="WD 1" evidence="2">
    <location>
        <begin position="32"/>
        <end position="125"/>
    </location>
</feature>
<feature type="repeat" description="WD 2" evidence="2">
    <location>
        <begin position="126"/>
        <end position="175"/>
    </location>
</feature>
<feature type="repeat" description="WD 3" evidence="2">
    <location>
        <begin position="176"/>
        <end position="223"/>
    </location>
</feature>
<feature type="repeat" description="WD 4" evidence="2">
    <location>
        <begin position="225"/>
        <end position="270"/>
    </location>
</feature>
<feature type="repeat" description="WD 5" evidence="2">
    <location>
        <begin position="271"/>
        <end position="314"/>
    </location>
</feature>
<feature type="repeat" description="WD 6" evidence="2">
    <location>
        <begin position="315"/>
        <end position="371"/>
    </location>
</feature>
<feature type="repeat" description="WD 7" evidence="2">
    <location>
        <begin position="372"/>
        <end position="404"/>
    </location>
</feature>
<feature type="modified residue" description="N-acetylalanine" evidence="1">
    <location>
        <position position="2"/>
    </location>
</feature>
<feature type="sequence conflict" description="In Ref. 2; AAH77257." evidence="5" ref="2">
    <original>THD</original>
    <variation>NHE</variation>
    <location>
        <begin position="122"/>
        <end position="124"/>
    </location>
</feature>
<feature type="sequence conflict" description="In Ref. 2; AAH77257." evidence="5" ref="2">
    <original>N</original>
    <variation>D</variation>
    <location>
        <position position="170"/>
    </location>
</feature>
<reference key="1">
    <citation type="journal article" date="1999" name="Mol. Cell. Biol.">
        <title>Functional analysis of the SIN3-histone deacetylase RPD3-RbAp48-histone H4 connection in the Xenopus oocyte.</title>
        <authorList>
            <person name="Vermaak D."/>
            <person name="Wade P.A."/>
            <person name="Jones P.L."/>
            <person name="Shi Y.-B."/>
            <person name="Wolffe A.P."/>
        </authorList>
    </citation>
    <scope>NUCLEOTIDE SEQUENCE [MRNA]</scope>
    <scope>FUNCTION</scope>
    <scope>INTERACTION WITH HDAC1-B; HISTONE H4 AND SIN3A</scope>
    <scope>SUBCELLULAR LOCATION</scope>
</reference>
<reference key="2">
    <citation type="submission" date="2004-07" db="EMBL/GenBank/DDBJ databases">
        <authorList>
            <consortium name="NIH - Xenopus Gene Collection (XGC) project"/>
        </authorList>
    </citation>
    <scope>NUCLEOTIDE SEQUENCE [LARGE SCALE MRNA]</scope>
    <source>
        <tissue>Spleen</tissue>
    </source>
</reference>
<reference key="3">
    <citation type="journal article" date="2001" name="J. Biol. Chem.">
        <title>Multiple N-CoR complexes contain distinct histone deacetylases.</title>
        <authorList>
            <person name="Jones P.L."/>
            <person name="Sachs L.M."/>
            <person name="Rouse N."/>
            <person name="Wade P.A."/>
            <person name="Shi Y.-B."/>
        </authorList>
    </citation>
    <scope>INTERACTION WITH HDAC1; HDAC2; NCOR1 AND SIN3A</scope>
</reference>
<sequence length="425" mass="47569">MADKEAAFDDAVEERVINEEYKIWKKNTPFLYDLVMTHALEWPSLTAQWLSDVTRPDGKDFSIHRLVLGTHTSDEQNHLVIASVQLPNDDAQFDASHYDSEKGEFGGFGSVSGKIEIEIKITHDGEVNRARYMPQNPCIIATKTPTSDVLVFDYTKHPSKPDPSGECNPNLRLRGHQKEGYGLSWNPNLSGNLLSASDDHTICLWDISAVPKEGKVVDAKTIFTGHTAVVEDVSWHLLHESLFGSVADDQKLMIWDTRSNNTSKPSHSVDAHTAEVNCLSFNPYSEFILATGSADKTVALWDLRNLKLKLHSFESHKDEIFQVQWSPHNETILASSGTDRRLNVWDLSKIGEEQSPEDAEDGPPELLFIHGGHTAKISDFSWNPNEPWVICSVSEDNIMQVWQMAENIYNDEDTEGGVDPEGQGS</sequence>
<dbReference type="EMBL" id="AF073787">
    <property type="protein sequence ID" value="AAC26046.1"/>
    <property type="molecule type" value="mRNA"/>
</dbReference>
<dbReference type="EMBL" id="BC077257">
    <property type="protein sequence ID" value="AAH77257.1"/>
    <property type="molecule type" value="mRNA"/>
</dbReference>
<dbReference type="RefSeq" id="NP_001083811.1">
    <property type="nucleotide sequence ID" value="NM_001090342.1"/>
</dbReference>
<dbReference type="SMR" id="O93377"/>
<dbReference type="BioGRID" id="100456">
    <property type="interactions" value="2"/>
</dbReference>
<dbReference type="IntAct" id="O93377">
    <property type="interactions" value="1"/>
</dbReference>
<dbReference type="DNASU" id="399131"/>
<dbReference type="GeneID" id="399131"/>
<dbReference type="KEGG" id="xla:399131"/>
<dbReference type="AGR" id="Xenbase:XB-GENE-482006"/>
<dbReference type="CTD" id="399131"/>
<dbReference type="Xenbase" id="XB-GENE-482006">
    <property type="gene designation" value="rbbp4.L"/>
</dbReference>
<dbReference type="OrthoDB" id="427795at2759"/>
<dbReference type="Proteomes" id="UP000186698">
    <property type="component" value="Chromosome 2L"/>
</dbReference>
<dbReference type="Bgee" id="399131">
    <property type="expression patterns" value="Expressed in ovary and 19 other cell types or tissues"/>
</dbReference>
<dbReference type="GO" id="GO:0033186">
    <property type="term" value="C:CAF-1 complex"/>
    <property type="evidence" value="ECO:0000250"/>
    <property type="project" value="UniProtKB"/>
</dbReference>
<dbReference type="GO" id="GO:0000781">
    <property type="term" value="C:chromosome, telomeric region"/>
    <property type="evidence" value="ECO:0007669"/>
    <property type="project" value="UniProtKB-SubCell"/>
</dbReference>
<dbReference type="GO" id="GO:0035098">
    <property type="term" value="C:ESC/E(Z) complex"/>
    <property type="evidence" value="ECO:0000250"/>
    <property type="project" value="UniProtKB"/>
</dbReference>
<dbReference type="GO" id="GO:0005634">
    <property type="term" value="C:nucleus"/>
    <property type="evidence" value="ECO:0000318"/>
    <property type="project" value="GO_Central"/>
</dbReference>
<dbReference type="GO" id="GO:0016581">
    <property type="term" value="C:NuRD complex"/>
    <property type="evidence" value="ECO:0000318"/>
    <property type="project" value="GO_Central"/>
</dbReference>
<dbReference type="GO" id="GO:0042393">
    <property type="term" value="F:histone binding"/>
    <property type="evidence" value="ECO:0000318"/>
    <property type="project" value="GO_Central"/>
</dbReference>
<dbReference type="GO" id="GO:0006338">
    <property type="term" value="P:chromatin remodeling"/>
    <property type="evidence" value="ECO:0000318"/>
    <property type="project" value="GO_Central"/>
</dbReference>
<dbReference type="GO" id="GO:0006260">
    <property type="term" value="P:DNA replication"/>
    <property type="evidence" value="ECO:0007669"/>
    <property type="project" value="UniProtKB-KW"/>
</dbReference>
<dbReference type="GO" id="GO:0006335">
    <property type="term" value="P:DNA replication-dependent chromatin assembly"/>
    <property type="evidence" value="ECO:0000250"/>
    <property type="project" value="UniProtKB"/>
</dbReference>
<dbReference type="GO" id="GO:0006355">
    <property type="term" value="P:regulation of DNA-templated transcription"/>
    <property type="evidence" value="ECO:0000318"/>
    <property type="project" value="GO_Central"/>
</dbReference>
<dbReference type="FunFam" id="2.130.10.10:FF:000021">
    <property type="entry name" value="histone-binding protein RBBP4 isoform X1"/>
    <property type="match status" value="1"/>
</dbReference>
<dbReference type="Gene3D" id="2.130.10.10">
    <property type="entry name" value="YVTN repeat-like/Quinoprotein amine dehydrogenase"/>
    <property type="match status" value="1"/>
</dbReference>
<dbReference type="InterPro" id="IPR020472">
    <property type="entry name" value="G-protein_beta_WD-40_rep"/>
</dbReference>
<dbReference type="InterPro" id="IPR022052">
    <property type="entry name" value="Histone-bd_RBBP4-like_N"/>
</dbReference>
<dbReference type="InterPro" id="IPR015943">
    <property type="entry name" value="WD40/YVTN_repeat-like_dom_sf"/>
</dbReference>
<dbReference type="InterPro" id="IPR019775">
    <property type="entry name" value="WD40_repeat_CS"/>
</dbReference>
<dbReference type="InterPro" id="IPR036322">
    <property type="entry name" value="WD40_repeat_dom_sf"/>
</dbReference>
<dbReference type="InterPro" id="IPR001680">
    <property type="entry name" value="WD40_rpt"/>
</dbReference>
<dbReference type="InterPro" id="IPR050459">
    <property type="entry name" value="WD_repeat_RBAP46/RBAP48/MSI1"/>
</dbReference>
<dbReference type="PANTHER" id="PTHR22850">
    <property type="entry name" value="WD40 REPEAT FAMILY"/>
    <property type="match status" value="1"/>
</dbReference>
<dbReference type="Pfam" id="PF12265">
    <property type="entry name" value="CAF1C_H4-bd"/>
    <property type="match status" value="1"/>
</dbReference>
<dbReference type="Pfam" id="PF00400">
    <property type="entry name" value="WD40"/>
    <property type="match status" value="5"/>
</dbReference>
<dbReference type="PRINTS" id="PR00320">
    <property type="entry name" value="GPROTEINBRPT"/>
</dbReference>
<dbReference type="SMART" id="SM00320">
    <property type="entry name" value="WD40"/>
    <property type="match status" value="6"/>
</dbReference>
<dbReference type="SUPFAM" id="SSF50978">
    <property type="entry name" value="WD40 repeat-like"/>
    <property type="match status" value="1"/>
</dbReference>
<dbReference type="PROSITE" id="PS00678">
    <property type="entry name" value="WD_REPEATS_1"/>
    <property type="match status" value="3"/>
</dbReference>
<dbReference type="PROSITE" id="PS50082">
    <property type="entry name" value="WD_REPEATS_2"/>
    <property type="match status" value="5"/>
</dbReference>
<dbReference type="PROSITE" id="PS50294">
    <property type="entry name" value="WD_REPEATS_REGION"/>
    <property type="match status" value="1"/>
</dbReference>